<dbReference type="EC" id="2.7.8.7" evidence="1"/>
<dbReference type="EMBL" id="CP000485">
    <property type="protein sequence ID" value="ABK83642.1"/>
    <property type="molecule type" value="Genomic_DNA"/>
</dbReference>
<dbReference type="RefSeq" id="WP_000635040.1">
    <property type="nucleotide sequence ID" value="NC_008600.1"/>
</dbReference>
<dbReference type="SMR" id="A0R8U9"/>
<dbReference type="GeneID" id="45020288"/>
<dbReference type="KEGG" id="btl:BALH_0235"/>
<dbReference type="HOGENOM" id="CLU_089696_1_2_9"/>
<dbReference type="GO" id="GO:0005829">
    <property type="term" value="C:cytosol"/>
    <property type="evidence" value="ECO:0007669"/>
    <property type="project" value="TreeGrafter"/>
</dbReference>
<dbReference type="GO" id="GO:0008897">
    <property type="term" value="F:holo-[acyl-carrier-protein] synthase activity"/>
    <property type="evidence" value="ECO:0007669"/>
    <property type="project" value="UniProtKB-UniRule"/>
</dbReference>
<dbReference type="GO" id="GO:0000287">
    <property type="term" value="F:magnesium ion binding"/>
    <property type="evidence" value="ECO:0007669"/>
    <property type="project" value="UniProtKB-UniRule"/>
</dbReference>
<dbReference type="GO" id="GO:0006633">
    <property type="term" value="P:fatty acid biosynthetic process"/>
    <property type="evidence" value="ECO:0007669"/>
    <property type="project" value="UniProtKB-UniRule"/>
</dbReference>
<dbReference type="GO" id="GO:0019878">
    <property type="term" value="P:lysine biosynthetic process via aminoadipic acid"/>
    <property type="evidence" value="ECO:0007669"/>
    <property type="project" value="TreeGrafter"/>
</dbReference>
<dbReference type="Gene3D" id="3.90.470.20">
    <property type="entry name" value="4'-phosphopantetheinyl transferase domain"/>
    <property type="match status" value="1"/>
</dbReference>
<dbReference type="HAMAP" id="MF_00101">
    <property type="entry name" value="AcpS"/>
    <property type="match status" value="1"/>
</dbReference>
<dbReference type="InterPro" id="IPR008278">
    <property type="entry name" value="4-PPantetheinyl_Trfase_dom"/>
</dbReference>
<dbReference type="InterPro" id="IPR037143">
    <property type="entry name" value="4-PPantetheinyl_Trfase_dom_sf"/>
</dbReference>
<dbReference type="InterPro" id="IPR002582">
    <property type="entry name" value="ACPS"/>
</dbReference>
<dbReference type="InterPro" id="IPR050559">
    <property type="entry name" value="P-Pant_transferase_sf"/>
</dbReference>
<dbReference type="InterPro" id="IPR004568">
    <property type="entry name" value="Ppantetheine-prot_Trfase_dom"/>
</dbReference>
<dbReference type="NCBIfam" id="TIGR00516">
    <property type="entry name" value="acpS"/>
    <property type="match status" value="1"/>
</dbReference>
<dbReference type="NCBIfam" id="TIGR00556">
    <property type="entry name" value="pantethn_trn"/>
    <property type="match status" value="1"/>
</dbReference>
<dbReference type="PANTHER" id="PTHR12215:SF10">
    <property type="entry name" value="L-AMINOADIPATE-SEMIALDEHYDE DEHYDROGENASE-PHOSPHOPANTETHEINYL TRANSFERASE"/>
    <property type="match status" value="1"/>
</dbReference>
<dbReference type="PANTHER" id="PTHR12215">
    <property type="entry name" value="PHOSPHOPANTETHEINE TRANSFERASE"/>
    <property type="match status" value="1"/>
</dbReference>
<dbReference type="Pfam" id="PF01648">
    <property type="entry name" value="ACPS"/>
    <property type="match status" value="1"/>
</dbReference>
<dbReference type="SUPFAM" id="SSF56214">
    <property type="entry name" value="4'-phosphopantetheinyl transferase"/>
    <property type="match status" value="1"/>
</dbReference>
<gene>
    <name evidence="1" type="primary">acpS</name>
    <name type="ordered locus">BALH_0235</name>
</gene>
<reference key="1">
    <citation type="journal article" date="2007" name="J. Bacteriol.">
        <title>The complete genome sequence of Bacillus thuringiensis Al Hakam.</title>
        <authorList>
            <person name="Challacombe J.F."/>
            <person name="Altherr M.R."/>
            <person name="Xie G."/>
            <person name="Bhotika S.S."/>
            <person name="Brown N."/>
            <person name="Bruce D."/>
            <person name="Campbell C.S."/>
            <person name="Campbell M.L."/>
            <person name="Chen J."/>
            <person name="Chertkov O."/>
            <person name="Cleland C."/>
            <person name="Dimitrijevic M."/>
            <person name="Doggett N.A."/>
            <person name="Fawcett J.J."/>
            <person name="Glavina T."/>
            <person name="Goodwin L.A."/>
            <person name="Green L.D."/>
            <person name="Han C.S."/>
            <person name="Hill K.K."/>
            <person name="Hitchcock P."/>
            <person name="Jackson P.J."/>
            <person name="Keim P."/>
            <person name="Kewalramani A.R."/>
            <person name="Longmire J."/>
            <person name="Lucas S."/>
            <person name="Malfatti S."/>
            <person name="Martinez D."/>
            <person name="McMurry K."/>
            <person name="Meincke L.J."/>
            <person name="Misra M."/>
            <person name="Moseman B.L."/>
            <person name="Mundt M."/>
            <person name="Munk A.C."/>
            <person name="Okinaka R.T."/>
            <person name="Parson-Quintana B."/>
            <person name="Reilly L.P."/>
            <person name="Richardson P."/>
            <person name="Robinson D.L."/>
            <person name="Saunders E."/>
            <person name="Tapia R."/>
            <person name="Tesmer J.G."/>
            <person name="Thayer N."/>
            <person name="Thompson L.S."/>
            <person name="Tice H."/>
            <person name="Ticknor L.O."/>
            <person name="Wills P.L."/>
            <person name="Gilna P."/>
            <person name="Brettin T.S."/>
        </authorList>
    </citation>
    <scope>NUCLEOTIDE SEQUENCE [LARGE SCALE GENOMIC DNA]</scope>
    <source>
        <strain>Al Hakam</strain>
    </source>
</reference>
<organism>
    <name type="scientific">Bacillus thuringiensis (strain Al Hakam)</name>
    <dbReference type="NCBI Taxonomy" id="412694"/>
    <lineage>
        <taxon>Bacteria</taxon>
        <taxon>Bacillati</taxon>
        <taxon>Bacillota</taxon>
        <taxon>Bacilli</taxon>
        <taxon>Bacillales</taxon>
        <taxon>Bacillaceae</taxon>
        <taxon>Bacillus</taxon>
        <taxon>Bacillus cereus group</taxon>
    </lineage>
</organism>
<keyword id="KW-0963">Cytoplasm</keyword>
<keyword id="KW-0275">Fatty acid biosynthesis</keyword>
<keyword id="KW-0276">Fatty acid metabolism</keyword>
<keyword id="KW-0444">Lipid biosynthesis</keyword>
<keyword id="KW-0443">Lipid metabolism</keyword>
<keyword id="KW-0460">Magnesium</keyword>
<keyword id="KW-0479">Metal-binding</keyword>
<keyword id="KW-0808">Transferase</keyword>
<proteinExistence type="inferred from homology"/>
<sequence length="119" mass="13100">MIVGIGIDIIELNRIEKMLDGKLKFMERILTENERNVAKGLKGSRLTEFVAGRFAAKEAYSKAVGTGIGKEVSFLDIEVRNDDRGKPILITSTEHIVHLSISHSKEFAVAQVVLESSSS</sequence>
<feature type="chain" id="PRO_1000008386" description="Holo-[acyl-carrier-protein] synthase">
    <location>
        <begin position="1"/>
        <end position="119"/>
    </location>
</feature>
<feature type="binding site" evidence="1">
    <location>
        <position position="8"/>
    </location>
    <ligand>
        <name>Mg(2+)</name>
        <dbReference type="ChEBI" id="CHEBI:18420"/>
    </ligand>
</feature>
<feature type="binding site" evidence="1">
    <location>
        <position position="58"/>
    </location>
    <ligand>
        <name>Mg(2+)</name>
        <dbReference type="ChEBI" id="CHEBI:18420"/>
    </ligand>
</feature>
<evidence type="ECO:0000255" key="1">
    <source>
        <dbReference type="HAMAP-Rule" id="MF_00101"/>
    </source>
</evidence>
<protein>
    <recommendedName>
        <fullName evidence="1">Holo-[acyl-carrier-protein] synthase</fullName>
        <shortName evidence="1">Holo-ACP synthase</shortName>
        <ecNumber evidence="1">2.7.8.7</ecNumber>
    </recommendedName>
    <alternativeName>
        <fullName evidence="1">4'-phosphopantetheinyl transferase AcpS</fullName>
    </alternativeName>
</protein>
<comment type="function">
    <text evidence="1">Transfers the 4'-phosphopantetheine moiety from coenzyme A to a Ser of acyl-carrier-protein.</text>
</comment>
<comment type="catalytic activity">
    <reaction evidence="1">
        <text>apo-[ACP] + CoA = holo-[ACP] + adenosine 3',5'-bisphosphate + H(+)</text>
        <dbReference type="Rhea" id="RHEA:12068"/>
        <dbReference type="Rhea" id="RHEA-COMP:9685"/>
        <dbReference type="Rhea" id="RHEA-COMP:9690"/>
        <dbReference type="ChEBI" id="CHEBI:15378"/>
        <dbReference type="ChEBI" id="CHEBI:29999"/>
        <dbReference type="ChEBI" id="CHEBI:57287"/>
        <dbReference type="ChEBI" id="CHEBI:58343"/>
        <dbReference type="ChEBI" id="CHEBI:64479"/>
        <dbReference type="EC" id="2.7.8.7"/>
    </reaction>
</comment>
<comment type="cofactor">
    <cofactor evidence="1">
        <name>Mg(2+)</name>
        <dbReference type="ChEBI" id="CHEBI:18420"/>
    </cofactor>
</comment>
<comment type="subcellular location">
    <subcellularLocation>
        <location evidence="1">Cytoplasm</location>
    </subcellularLocation>
</comment>
<comment type="similarity">
    <text evidence="1">Belongs to the P-Pant transferase superfamily. AcpS family.</text>
</comment>
<accession>A0R8U9</accession>
<name>ACPS_BACAH</name>